<keyword id="KW-0963">Cytoplasm</keyword>
<keyword id="KW-0378">Hydrolase</keyword>
<keyword id="KW-0694">RNA-binding</keyword>
<keyword id="KW-0820">tRNA-binding</keyword>
<protein>
    <recommendedName>
        <fullName evidence="1">D-aminoacyl-tRNA deacylase</fullName>
        <shortName evidence="1">DTD</shortName>
        <ecNumber evidence="1">3.1.1.96</ecNumber>
    </recommendedName>
    <alternativeName>
        <fullName evidence="1">Gly-tRNA(Ala) deacylase</fullName>
    </alternativeName>
</protein>
<gene>
    <name evidence="1" type="primary">dtd</name>
    <name type="ordered locus">ECIAI1_4087</name>
</gene>
<evidence type="ECO:0000255" key="1">
    <source>
        <dbReference type="HAMAP-Rule" id="MF_00518"/>
    </source>
</evidence>
<accession>B7M686</accession>
<sequence>MIALIQRVTRASVTVEGEVTGEIGAGLLVLLGVEKDDDEQKANRLCERVLGYRIFSDAEGKMNLNVQQAGGSVLVVSQFTLAADTERGMRPSFSKGASPDRAEALYDYFVERCRQQEMNTQTGRFAADMQVSLVNDGPVTFWLQV</sequence>
<reference key="1">
    <citation type="journal article" date="2009" name="PLoS Genet.">
        <title>Organised genome dynamics in the Escherichia coli species results in highly diverse adaptive paths.</title>
        <authorList>
            <person name="Touchon M."/>
            <person name="Hoede C."/>
            <person name="Tenaillon O."/>
            <person name="Barbe V."/>
            <person name="Baeriswyl S."/>
            <person name="Bidet P."/>
            <person name="Bingen E."/>
            <person name="Bonacorsi S."/>
            <person name="Bouchier C."/>
            <person name="Bouvet O."/>
            <person name="Calteau A."/>
            <person name="Chiapello H."/>
            <person name="Clermont O."/>
            <person name="Cruveiller S."/>
            <person name="Danchin A."/>
            <person name="Diard M."/>
            <person name="Dossat C."/>
            <person name="Karoui M.E."/>
            <person name="Frapy E."/>
            <person name="Garry L."/>
            <person name="Ghigo J.M."/>
            <person name="Gilles A.M."/>
            <person name="Johnson J."/>
            <person name="Le Bouguenec C."/>
            <person name="Lescat M."/>
            <person name="Mangenot S."/>
            <person name="Martinez-Jehanne V."/>
            <person name="Matic I."/>
            <person name="Nassif X."/>
            <person name="Oztas S."/>
            <person name="Petit M.A."/>
            <person name="Pichon C."/>
            <person name="Rouy Z."/>
            <person name="Ruf C.S."/>
            <person name="Schneider D."/>
            <person name="Tourret J."/>
            <person name="Vacherie B."/>
            <person name="Vallenet D."/>
            <person name="Medigue C."/>
            <person name="Rocha E.P.C."/>
            <person name="Denamur E."/>
        </authorList>
    </citation>
    <scope>NUCLEOTIDE SEQUENCE [LARGE SCALE GENOMIC DNA]</scope>
    <source>
        <strain>IAI1</strain>
    </source>
</reference>
<feature type="chain" id="PRO_1000127526" description="D-aminoacyl-tRNA deacylase">
    <location>
        <begin position="1"/>
        <end position="145"/>
    </location>
</feature>
<feature type="short sequence motif" description="Gly-cisPro motif, important for rejection of L-amino acids" evidence="1">
    <location>
        <begin position="137"/>
        <end position="138"/>
    </location>
</feature>
<comment type="function">
    <text evidence="1">An aminoacyl-tRNA editing enzyme that deacylates mischarged D-aminoacyl-tRNAs. Also deacylates mischarged glycyl-tRNA(Ala), protecting cells against glycine mischarging by AlaRS. Acts via tRNA-based rather than protein-based catalysis; rejects L-amino acids rather than detecting D-amino acids in the active site. By recycling D-aminoacyl-tRNA to D-amino acids and free tRNA molecules, this enzyme counteracts the toxicity associated with the formation of D-aminoacyl-tRNA entities in vivo and helps enforce protein L-homochirality.</text>
</comment>
<comment type="catalytic activity">
    <reaction evidence="1">
        <text>glycyl-tRNA(Ala) + H2O = tRNA(Ala) + glycine + H(+)</text>
        <dbReference type="Rhea" id="RHEA:53744"/>
        <dbReference type="Rhea" id="RHEA-COMP:9657"/>
        <dbReference type="Rhea" id="RHEA-COMP:13640"/>
        <dbReference type="ChEBI" id="CHEBI:15377"/>
        <dbReference type="ChEBI" id="CHEBI:15378"/>
        <dbReference type="ChEBI" id="CHEBI:57305"/>
        <dbReference type="ChEBI" id="CHEBI:78442"/>
        <dbReference type="ChEBI" id="CHEBI:78522"/>
        <dbReference type="EC" id="3.1.1.96"/>
    </reaction>
</comment>
<comment type="catalytic activity">
    <reaction evidence="1">
        <text>a D-aminoacyl-tRNA + H2O = a tRNA + a D-alpha-amino acid + H(+)</text>
        <dbReference type="Rhea" id="RHEA:13953"/>
        <dbReference type="Rhea" id="RHEA-COMP:10123"/>
        <dbReference type="Rhea" id="RHEA-COMP:10124"/>
        <dbReference type="ChEBI" id="CHEBI:15377"/>
        <dbReference type="ChEBI" id="CHEBI:15378"/>
        <dbReference type="ChEBI" id="CHEBI:59871"/>
        <dbReference type="ChEBI" id="CHEBI:78442"/>
        <dbReference type="ChEBI" id="CHEBI:79333"/>
        <dbReference type="EC" id="3.1.1.96"/>
    </reaction>
</comment>
<comment type="subunit">
    <text evidence="1">Homodimer.</text>
</comment>
<comment type="subcellular location">
    <subcellularLocation>
        <location evidence="1">Cytoplasm</location>
    </subcellularLocation>
</comment>
<comment type="domain">
    <text evidence="1">A Gly-cisPro motif from one monomer fits into the active site of the other monomer to allow specific chiral rejection of L-amino acids.</text>
</comment>
<comment type="similarity">
    <text evidence="1">Belongs to the DTD family.</text>
</comment>
<proteinExistence type="inferred from homology"/>
<dbReference type="EC" id="3.1.1.96" evidence="1"/>
<dbReference type="EMBL" id="CU928160">
    <property type="protein sequence ID" value="CAR00858.1"/>
    <property type="molecule type" value="Genomic_DNA"/>
</dbReference>
<dbReference type="RefSeq" id="WP_000560983.1">
    <property type="nucleotide sequence ID" value="NC_011741.1"/>
</dbReference>
<dbReference type="SMR" id="B7M686"/>
<dbReference type="GeneID" id="93778051"/>
<dbReference type="KEGG" id="ecr:ECIAI1_4087"/>
<dbReference type="HOGENOM" id="CLU_076901_1_0_6"/>
<dbReference type="GO" id="GO:0005737">
    <property type="term" value="C:cytoplasm"/>
    <property type="evidence" value="ECO:0007669"/>
    <property type="project" value="UniProtKB-SubCell"/>
</dbReference>
<dbReference type="GO" id="GO:0051500">
    <property type="term" value="F:D-tyrosyl-tRNA(Tyr) deacylase activity"/>
    <property type="evidence" value="ECO:0007669"/>
    <property type="project" value="TreeGrafter"/>
</dbReference>
<dbReference type="GO" id="GO:0106026">
    <property type="term" value="F:Gly-tRNA(Ala) deacylase activity"/>
    <property type="evidence" value="ECO:0007669"/>
    <property type="project" value="UniProtKB-UniRule"/>
</dbReference>
<dbReference type="GO" id="GO:0043908">
    <property type="term" value="F:Ser(Gly)-tRNA(Ala) hydrolase activity"/>
    <property type="evidence" value="ECO:0007669"/>
    <property type="project" value="UniProtKB-UniRule"/>
</dbReference>
<dbReference type="GO" id="GO:0000049">
    <property type="term" value="F:tRNA binding"/>
    <property type="evidence" value="ECO:0007669"/>
    <property type="project" value="UniProtKB-UniRule"/>
</dbReference>
<dbReference type="GO" id="GO:0019478">
    <property type="term" value="P:D-amino acid catabolic process"/>
    <property type="evidence" value="ECO:0007669"/>
    <property type="project" value="UniProtKB-UniRule"/>
</dbReference>
<dbReference type="CDD" id="cd00563">
    <property type="entry name" value="Dtyr_deacylase"/>
    <property type="match status" value="1"/>
</dbReference>
<dbReference type="FunFam" id="3.50.80.10:FF:000001">
    <property type="entry name" value="D-aminoacyl-tRNA deacylase"/>
    <property type="match status" value="1"/>
</dbReference>
<dbReference type="Gene3D" id="3.50.80.10">
    <property type="entry name" value="D-tyrosyl-tRNA(Tyr) deacylase"/>
    <property type="match status" value="1"/>
</dbReference>
<dbReference type="HAMAP" id="MF_00518">
    <property type="entry name" value="Deacylase_Dtd"/>
    <property type="match status" value="1"/>
</dbReference>
<dbReference type="InterPro" id="IPR003732">
    <property type="entry name" value="Daa-tRNA_deacyls_DTD"/>
</dbReference>
<dbReference type="InterPro" id="IPR023509">
    <property type="entry name" value="DTD-like_sf"/>
</dbReference>
<dbReference type="NCBIfam" id="TIGR00256">
    <property type="entry name" value="D-aminoacyl-tRNA deacylase"/>
    <property type="match status" value="1"/>
</dbReference>
<dbReference type="PANTHER" id="PTHR10472:SF5">
    <property type="entry name" value="D-AMINOACYL-TRNA DEACYLASE 1"/>
    <property type="match status" value="1"/>
</dbReference>
<dbReference type="PANTHER" id="PTHR10472">
    <property type="entry name" value="D-TYROSYL-TRNA TYR DEACYLASE"/>
    <property type="match status" value="1"/>
</dbReference>
<dbReference type="Pfam" id="PF02580">
    <property type="entry name" value="Tyr_Deacylase"/>
    <property type="match status" value="1"/>
</dbReference>
<dbReference type="SUPFAM" id="SSF69500">
    <property type="entry name" value="DTD-like"/>
    <property type="match status" value="1"/>
</dbReference>
<organism>
    <name type="scientific">Escherichia coli O8 (strain IAI1)</name>
    <dbReference type="NCBI Taxonomy" id="585034"/>
    <lineage>
        <taxon>Bacteria</taxon>
        <taxon>Pseudomonadati</taxon>
        <taxon>Pseudomonadota</taxon>
        <taxon>Gammaproteobacteria</taxon>
        <taxon>Enterobacterales</taxon>
        <taxon>Enterobacteriaceae</taxon>
        <taxon>Escherichia</taxon>
    </lineage>
</organism>
<name>DTD_ECO8A</name>